<comment type="function">
    <text evidence="1">One of the primary rRNA binding proteins, it binds directly to 16S rRNA where it helps nucleate assembly of the platform of the 30S subunit by binding and bridging several RNA helices of the 16S rRNA.</text>
</comment>
<comment type="function">
    <text evidence="1">Forms an intersubunit bridge (bridge B4) with the 23S rRNA of the 50S subunit in the ribosome.</text>
</comment>
<comment type="subunit">
    <text evidence="1">Part of the 30S ribosomal subunit. Forms a bridge to the 50S subunit in the 70S ribosome, contacting the 23S rRNA.</text>
</comment>
<comment type="similarity">
    <text evidence="1">Belongs to the universal ribosomal protein uS15 family.</text>
</comment>
<feature type="chain" id="PRO_1000166395" description="Small ribosomal subunit protein uS15">
    <location>
        <begin position="1"/>
        <end position="89"/>
    </location>
</feature>
<reference key="1">
    <citation type="submission" date="2009-01" db="EMBL/GenBank/DDBJ databases">
        <title>Complete sequence of Anaeromyxobacter dehalogenans 2CP-1.</title>
        <authorList>
            <person name="Lucas S."/>
            <person name="Copeland A."/>
            <person name="Lapidus A."/>
            <person name="Glavina del Rio T."/>
            <person name="Dalin E."/>
            <person name="Tice H."/>
            <person name="Bruce D."/>
            <person name="Goodwin L."/>
            <person name="Pitluck S."/>
            <person name="Saunders E."/>
            <person name="Brettin T."/>
            <person name="Detter J.C."/>
            <person name="Han C."/>
            <person name="Larimer F."/>
            <person name="Land M."/>
            <person name="Hauser L."/>
            <person name="Kyrpides N."/>
            <person name="Ovchinnikova G."/>
            <person name="Beliaev A.S."/>
            <person name="Richardson P."/>
        </authorList>
    </citation>
    <scope>NUCLEOTIDE SEQUENCE [LARGE SCALE GENOMIC DNA]</scope>
    <source>
        <strain>2CP-1 / ATCC BAA-258</strain>
    </source>
</reference>
<dbReference type="EMBL" id="CP001359">
    <property type="protein sequence ID" value="ACL64578.1"/>
    <property type="molecule type" value="Genomic_DNA"/>
</dbReference>
<dbReference type="RefSeq" id="WP_011420164.1">
    <property type="nucleotide sequence ID" value="NC_011891.1"/>
</dbReference>
<dbReference type="SMR" id="B8JFZ0"/>
<dbReference type="KEGG" id="acp:A2cp1_1234"/>
<dbReference type="HOGENOM" id="CLU_148518_0_0_7"/>
<dbReference type="Proteomes" id="UP000007089">
    <property type="component" value="Chromosome"/>
</dbReference>
<dbReference type="GO" id="GO:0022627">
    <property type="term" value="C:cytosolic small ribosomal subunit"/>
    <property type="evidence" value="ECO:0007669"/>
    <property type="project" value="TreeGrafter"/>
</dbReference>
<dbReference type="GO" id="GO:0019843">
    <property type="term" value="F:rRNA binding"/>
    <property type="evidence" value="ECO:0007669"/>
    <property type="project" value="UniProtKB-UniRule"/>
</dbReference>
<dbReference type="GO" id="GO:0003735">
    <property type="term" value="F:structural constituent of ribosome"/>
    <property type="evidence" value="ECO:0007669"/>
    <property type="project" value="InterPro"/>
</dbReference>
<dbReference type="GO" id="GO:0006412">
    <property type="term" value="P:translation"/>
    <property type="evidence" value="ECO:0007669"/>
    <property type="project" value="UniProtKB-UniRule"/>
</dbReference>
<dbReference type="CDD" id="cd00353">
    <property type="entry name" value="Ribosomal_S15p_S13e"/>
    <property type="match status" value="1"/>
</dbReference>
<dbReference type="FunFam" id="1.10.287.10:FF:000002">
    <property type="entry name" value="30S ribosomal protein S15"/>
    <property type="match status" value="1"/>
</dbReference>
<dbReference type="Gene3D" id="6.10.250.3130">
    <property type="match status" value="1"/>
</dbReference>
<dbReference type="Gene3D" id="1.10.287.10">
    <property type="entry name" value="S15/NS1, RNA-binding"/>
    <property type="match status" value="1"/>
</dbReference>
<dbReference type="HAMAP" id="MF_01343_B">
    <property type="entry name" value="Ribosomal_uS15_B"/>
    <property type="match status" value="1"/>
</dbReference>
<dbReference type="InterPro" id="IPR000589">
    <property type="entry name" value="Ribosomal_uS15"/>
</dbReference>
<dbReference type="InterPro" id="IPR005290">
    <property type="entry name" value="Ribosomal_uS15_bac-type"/>
</dbReference>
<dbReference type="InterPro" id="IPR009068">
    <property type="entry name" value="uS15_NS1_RNA-bd_sf"/>
</dbReference>
<dbReference type="NCBIfam" id="TIGR00952">
    <property type="entry name" value="S15_bact"/>
    <property type="match status" value="1"/>
</dbReference>
<dbReference type="PANTHER" id="PTHR23321">
    <property type="entry name" value="RIBOSOMAL PROTEIN S15, BACTERIAL AND ORGANELLAR"/>
    <property type="match status" value="1"/>
</dbReference>
<dbReference type="PANTHER" id="PTHR23321:SF26">
    <property type="entry name" value="SMALL RIBOSOMAL SUBUNIT PROTEIN US15M"/>
    <property type="match status" value="1"/>
</dbReference>
<dbReference type="Pfam" id="PF00312">
    <property type="entry name" value="Ribosomal_S15"/>
    <property type="match status" value="1"/>
</dbReference>
<dbReference type="SMART" id="SM01387">
    <property type="entry name" value="Ribosomal_S15"/>
    <property type="match status" value="1"/>
</dbReference>
<dbReference type="SUPFAM" id="SSF47060">
    <property type="entry name" value="S15/NS1 RNA-binding domain"/>
    <property type="match status" value="1"/>
</dbReference>
<dbReference type="PROSITE" id="PS00362">
    <property type="entry name" value="RIBOSOMAL_S15"/>
    <property type="match status" value="1"/>
</dbReference>
<gene>
    <name evidence="1" type="primary">rpsO</name>
    <name type="ordered locus">A2cp1_1234</name>
</gene>
<protein>
    <recommendedName>
        <fullName evidence="1">Small ribosomal subunit protein uS15</fullName>
    </recommendedName>
    <alternativeName>
        <fullName evidence="2">30S ribosomal protein S15</fullName>
    </alternativeName>
</protein>
<evidence type="ECO:0000255" key="1">
    <source>
        <dbReference type="HAMAP-Rule" id="MF_01343"/>
    </source>
</evidence>
<evidence type="ECO:0000305" key="2"/>
<accession>B8JFZ0</accession>
<sequence>MALVQEKKQELVQKYKRHEKDTGSPEVQVALLSERIAYLTEHFKTHKKDHHSRRGLLKLVGQRRRLLDYLRTIDQGRYKTLIDQLGIRK</sequence>
<name>RS15_ANAD2</name>
<organism>
    <name type="scientific">Anaeromyxobacter dehalogenans (strain 2CP-1 / ATCC BAA-258)</name>
    <dbReference type="NCBI Taxonomy" id="455488"/>
    <lineage>
        <taxon>Bacteria</taxon>
        <taxon>Pseudomonadati</taxon>
        <taxon>Myxococcota</taxon>
        <taxon>Myxococcia</taxon>
        <taxon>Myxococcales</taxon>
        <taxon>Cystobacterineae</taxon>
        <taxon>Anaeromyxobacteraceae</taxon>
        <taxon>Anaeromyxobacter</taxon>
    </lineage>
</organism>
<proteinExistence type="inferred from homology"/>
<keyword id="KW-0687">Ribonucleoprotein</keyword>
<keyword id="KW-0689">Ribosomal protein</keyword>
<keyword id="KW-0694">RNA-binding</keyword>
<keyword id="KW-0699">rRNA-binding</keyword>